<reference key="1">
    <citation type="journal article" date="1984" name="J. Virol.">
        <title>Nucleotide sequence of the gene encoding the serotype-specific antigen of human (Wa) rotavirus: comparison with the homologous genes from simian SA11 and UK bovine rotaviruses.</title>
        <authorList>
            <person name="Richardson M.A."/>
            <person name="Iwamoto A."/>
            <person name="Ikegami N."/>
            <person name="Nomoto A."/>
            <person name="Furuichi Y."/>
        </authorList>
    </citation>
    <scope>NUCLEOTIDE SEQUENCE [GENOMIC RNA]</scope>
</reference>
<reference key="2">
    <citation type="journal article" date="1985" name="Virus Res.">
        <title>Sequence of the serotype-specific glycoprotein of the human rotavirus Wa strain and comparison with other human rotavirus serotypes.</title>
        <authorList>
            <person name="Mason B.B."/>
            <person name="Dheer S.K."/>
            <person name="Hsiao C.-L."/>
            <person name="Zandle G."/>
            <person name="Kostek B."/>
            <person name="Rosanoff E.I."/>
            <person name="Hung P.P."/>
            <person name="Davis A.R."/>
        </authorList>
    </citation>
    <scope>NUCLEOTIDE SEQUENCE [GENOMIC RNA]</scope>
</reference>
<reference key="3">
    <citation type="journal article" date="1987" name="Virology">
        <title>Comparison of the amino acid sequences of the major neutralization protein of four human rotavirus serotypes.</title>
        <authorList>
            <person name="Green K.Y."/>
            <person name="Midthun K."/>
            <person name="Gorziglia M."/>
            <person name="Hoshino Y."/>
            <person name="Kapikian A.Z."/>
            <person name="Chanock R.M."/>
            <person name="Flores J."/>
        </authorList>
    </citation>
    <scope>NUCLEOTIDE SEQUENCE [GENOMIC RNA]</scope>
</reference>
<reference key="4">
    <citation type="journal article" date="2004" name="Trends Microbiol.">
        <title>Multistep entry of rotavirus into cells: a Versaillesque dance.</title>
        <authorList>
            <person name="Lopez S."/>
            <person name="Arias C.F."/>
        </authorList>
    </citation>
    <scope>REVIEW</scope>
</reference>
<organism>
    <name type="scientific">Rotavirus A (strain RVA/Human/United States/Wa/1974/G1P1A[8])</name>
    <name type="common">RV-A</name>
    <dbReference type="NCBI Taxonomy" id="10962"/>
    <lineage>
        <taxon>Viruses</taxon>
        <taxon>Riboviria</taxon>
        <taxon>Orthornavirae</taxon>
        <taxon>Duplornaviricota</taxon>
        <taxon>Resentoviricetes</taxon>
        <taxon>Reovirales</taxon>
        <taxon>Sedoreoviridae</taxon>
        <taxon>Rotavirus</taxon>
        <taxon>Rotavirus A</taxon>
    </lineage>
</organism>
<evidence type="ECO:0000250" key="1"/>
<evidence type="ECO:0000255" key="2"/>
<evidence type="ECO:0000255" key="3">
    <source>
        <dbReference type="HAMAP-Rule" id="MF_04131"/>
    </source>
</evidence>
<evidence type="ECO:0000303" key="4">
    <source>
    </source>
</evidence>
<evidence type="ECO:0000305" key="5"/>
<protein>
    <recommendedName>
        <fullName evidence="3">Outer capsid glycoprotein VP7</fullName>
    </recommendedName>
</protein>
<feature type="signal peptide" evidence="3">
    <location>
        <begin position="1"/>
        <end position="50"/>
    </location>
</feature>
<feature type="chain" id="PRO_0000149609" description="Outer capsid glycoprotein VP7" evidence="3">
    <location>
        <begin position="51"/>
        <end position="326"/>
    </location>
</feature>
<feature type="region of interest" description="CNP motif; interaction with ITGAV/ITGB3" evidence="3">
    <location>
        <begin position="165"/>
        <end position="167"/>
    </location>
</feature>
<feature type="region of interest" description="GPR motif; interaction with ITGAX/ITGB2" evidence="3">
    <location>
        <begin position="253"/>
        <end position="255"/>
    </location>
</feature>
<feature type="binding site" evidence="3">
    <location>
        <position position="95"/>
    </location>
    <ligand>
        <name>Ca(2+)</name>
        <dbReference type="ChEBI" id="CHEBI:29108"/>
        <label>1</label>
    </ligand>
</feature>
<feature type="binding site" evidence="3">
    <location>
        <position position="177"/>
    </location>
    <ligand>
        <name>Ca(2+)</name>
        <dbReference type="ChEBI" id="CHEBI:29108"/>
        <label>2</label>
    </ligand>
</feature>
<feature type="binding site" evidence="3">
    <location>
        <position position="206"/>
    </location>
    <ligand>
        <name>Ca(2+)</name>
        <dbReference type="ChEBI" id="CHEBI:29108"/>
        <label>1</label>
    </ligand>
</feature>
<feature type="binding site" evidence="3">
    <location>
        <position position="214"/>
    </location>
    <ligand>
        <name>Ca(2+)</name>
        <dbReference type="ChEBI" id="CHEBI:29108"/>
        <label>1</label>
    </ligand>
</feature>
<feature type="binding site" evidence="3">
    <location>
        <position position="216"/>
    </location>
    <ligand>
        <name>Ca(2+)</name>
        <dbReference type="ChEBI" id="CHEBI:29108"/>
        <label>1</label>
    </ligand>
</feature>
<feature type="binding site" evidence="3">
    <location>
        <position position="228"/>
    </location>
    <ligand>
        <name>Ca(2+)</name>
        <dbReference type="ChEBI" id="CHEBI:29108"/>
        <label>2</label>
    </ligand>
</feature>
<feature type="binding site" evidence="3">
    <location>
        <position position="229"/>
    </location>
    <ligand>
        <name>Ca(2+)</name>
        <dbReference type="ChEBI" id="CHEBI:29108"/>
        <label>2</label>
    </ligand>
</feature>
<feature type="binding site" evidence="3">
    <location>
        <position position="231"/>
    </location>
    <ligand>
        <name>Ca(2+)</name>
        <dbReference type="ChEBI" id="CHEBI:29108"/>
        <label>2</label>
    </ligand>
</feature>
<feature type="binding site" evidence="3">
    <location>
        <position position="301"/>
    </location>
    <ligand>
        <name>Ca(2+)</name>
        <dbReference type="ChEBI" id="CHEBI:29108"/>
        <label>2</label>
    </ligand>
</feature>
<feature type="glycosylation site" description="N-linked (GlcNAc...) asparagine; by host" evidence="2">
    <location>
        <position position="69"/>
    </location>
</feature>
<feature type="glycosylation site" description="N-linked (GlcNAc...) asparagine; by host" evidence="2">
    <location>
        <position position="238"/>
    </location>
</feature>
<feature type="disulfide bond" evidence="3">
    <location>
        <begin position="82"/>
        <end position="135"/>
    </location>
</feature>
<feature type="disulfide bond" evidence="3">
    <location>
        <begin position="165"/>
        <end position="249"/>
    </location>
</feature>
<feature type="disulfide bond" evidence="3">
    <location>
        <begin position="191"/>
        <end position="244"/>
    </location>
</feature>
<feature type="disulfide bond" evidence="3">
    <location>
        <begin position="196"/>
        <end position="207"/>
    </location>
</feature>
<feature type="splice variant" id="VSP_038632" description="In isoform 2." evidence="5">
    <location>
        <begin position="1"/>
        <end position="29"/>
    </location>
</feature>
<feature type="sequence conflict" description="In Ref. 2; AAA47342." evidence="5" ref="2">
    <original>E</original>
    <variation>K</variation>
    <location>
        <position position="149"/>
    </location>
</feature>
<feature type="sequence conflict" description="In Ref. 3." evidence="5" ref="3">
    <original>M</original>
    <variation>N</variation>
    <location>
        <position position="217"/>
    </location>
</feature>
<keyword id="KW-0024">Alternative initiation</keyword>
<keyword id="KW-0106">Calcium</keyword>
<keyword id="KW-0167">Capsid protein</keyword>
<keyword id="KW-1015">Disulfide bond</keyword>
<keyword id="KW-0325">Glycoprotein</keyword>
<keyword id="KW-1038">Host endoplasmic reticulum</keyword>
<keyword id="KW-0945">Host-virus interaction</keyword>
<keyword id="KW-0479">Metal-binding</keyword>
<keyword id="KW-1152">Outer capsid protein</keyword>
<keyword id="KW-0732">Signal</keyword>
<keyword id="KW-1146">T=13 icosahedral capsid protein</keyword>
<keyword id="KW-0946">Virion</keyword>
<proteinExistence type="inferred from homology"/>
<name>VP7_ROTHW</name>
<sequence length="326" mass="37341">MYGIEYTTILIFLISIILLNYILKSVTRIMDYIIYRFLLITVALFALTRAQNYGLNLPITGSMDAVYTNSTQEEVFLTSTLCLYYPTEASTQINDGDWKDSLSQMFLTKGWPTGSVYFKEYSNIVDFSVDPQLYCDYNLVLMKYDQSLELDMSELADLILNEWLCNPMDVTLYYYQQSGESNKWISMGSSCTVKVCPLNTQTLGIGCQTTNVDSFEMIAENEKLAIVDVVDGINHKINLTTTTCTIRNCKKLGPRENVAVIQVGGSNVLDITADPTTNPQTERMMRVNWKKWWQVFYTIVDYINQIVQVMSKRSRSLNSAAFYYRV</sequence>
<comment type="function">
    <text evidence="3">Calcium-binding protein that interacts with rotavirus cell receptors once the initial attachment by VP4 has been achieved. Rotavirus attachment and entry into the host cell probably involves multiple sequential contacts between the outer capsid proteins VP4 and VP7, and the cell receptors. Following entry into the host cell, low intracellular or intravesicular Ca(2+) concentration probably causes the calcium-stabilized VP7 trimers to dissociate from the virion. This step is probably necessary for the membrane-disrupting entry step and the release of VP4, which is locked onto the virion by VP7.</text>
</comment>
<comment type="subunit">
    <text evidence="3">Homotrimer; disulfide-linked. 2 Ca(2+) ions bound at each subunit interface in the trimer hold the trimer together. Interacts with the intermediate capsid protein VP6. Interacts with the outer capsid protein VP5*.</text>
</comment>
<comment type="subcellular location">
    <subcellularLocation>
        <location evidence="3">Virion</location>
    </subcellularLocation>
    <subcellularLocation>
        <location evidence="3">Host endoplasmic reticulum lumen</location>
    </subcellularLocation>
    <text evidence="3">The outer layer contains 780 copies of VP7, grouped as 260 trimers. Immature double-layered particles assembled in the cytoplasm bud across the membrane of the endoplasmic reticulum, acquiring during this process a transient lipid membrane that is modified with the ER resident viral glycoproteins NSP4 and VP7; these enveloped particles also contain VP4. As the particles move towards the interior of the ER. cisternae, the transient lipid membrane and the non-structural protein NSP4 are lost, while the virus surface proteins VP4 and VP7 rearrange to form the outermost virus protein layer, yielding mature infectious triple-layered particles.</text>
</comment>
<comment type="alternative products">
    <event type="alternative initiation"/>
    <isoform>
        <id>P03532-1</id>
        <name>1</name>
        <sequence type="displayed"/>
    </isoform>
    <isoform>
        <id>P03532-2</id>
        <name>2</name>
        <sequence type="described" ref="VSP_038632"/>
    </isoform>
</comment>
<comment type="PTM">
    <text evidence="1">Intramolecular disulfide bonds.</text>
</comment>
<comment type="PTM">
    <text evidence="3">N-glycosylated.</text>
</comment>
<comment type="PTM">
    <text evidence="3">The N-terminus is blocked possibly by pyroglutamic acid.</text>
</comment>
<comment type="miscellaneous">
    <text evidence="3 4">Some rotavirus strains are neuraminidase-sensitive and require sialic acid to attach to the cell surface. Some rotavirus strains are integrin-dependent. Some rotavirus strains depend on ganglioside for their entry into the host cell. Hsp70 also seems to be involved in the entry of some strains.</text>
</comment>
<comment type="miscellaneous">
    <text evidence="3">In group A rotaviruses, VP7 defines the G serotype.</text>
</comment>
<comment type="miscellaneous">
    <molecule>Isoform 2</molecule>
    <text evidence="5">Produced by alternative initiation at Met-30 of isoform 1.</text>
</comment>
<comment type="similarity">
    <text evidence="3">Belongs to the rotavirus VP7 family.</text>
</comment>
<comment type="sequence caution" evidence="5">
    <conflict type="erroneous initiation">
        <sequence resource="EMBL-CDS" id="AAA47310"/>
    </conflict>
</comment>
<organismHost>
    <name type="scientific">Homo sapiens</name>
    <name type="common">Human</name>
    <dbReference type="NCBI Taxonomy" id="9606"/>
</organismHost>
<accession>P03532</accession>
<dbReference type="EMBL" id="K02033">
    <property type="protein sequence ID" value="AAA47310.1"/>
    <property type="status" value="ALT_INIT"/>
    <property type="molecule type" value="Genomic_RNA"/>
</dbReference>
<dbReference type="EMBL" id="M21843">
    <property type="protein sequence ID" value="AAA47342.1"/>
    <property type="molecule type" value="Genomic_RNA"/>
</dbReference>
<dbReference type="PIR" id="A04137">
    <property type="entry name" value="VGXR7H"/>
</dbReference>
<dbReference type="PIR" id="D27620">
    <property type="entry name" value="VGXRWA"/>
</dbReference>
<dbReference type="SMR" id="P03532"/>
<dbReference type="ABCD" id="P03532">
    <property type="antibodies" value="2 sequenced antibodies"/>
</dbReference>
<dbReference type="Proteomes" id="UP000006581">
    <property type="component" value="Genome"/>
</dbReference>
<dbReference type="GO" id="GO:0044166">
    <property type="term" value="C:host cell endoplasmic reticulum lumen"/>
    <property type="evidence" value="ECO:0007669"/>
    <property type="project" value="UniProtKB-SubCell"/>
</dbReference>
<dbReference type="GO" id="GO:0039621">
    <property type="term" value="C:T=13 icosahedral viral capsid"/>
    <property type="evidence" value="ECO:0007669"/>
    <property type="project" value="UniProtKB-UniRule"/>
</dbReference>
<dbReference type="GO" id="GO:0039624">
    <property type="term" value="C:viral outer capsid"/>
    <property type="evidence" value="ECO:0007669"/>
    <property type="project" value="UniProtKB-UniRule"/>
</dbReference>
<dbReference type="GO" id="GO:0046872">
    <property type="term" value="F:metal ion binding"/>
    <property type="evidence" value="ECO:0007669"/>
    <property type="project" value="UniProtKB-KW"/>
</dbReference>
<dbReference type="Gene3D" id="3.40.50.11130">
    <property type="entry name" value="Glycoprotein VP7, domain 1"/>
    <property type="match status" value="1"/>
</dbReference>
<dbReference type="Gene3D" id="2.60.120.800">
    <property type="entry name" value="Rotavirus outer-layer protein VP7, domain 2"/>
    <property type="match status" value="1"/>
</dbReference>
<dbReference type="HAMAP" id="MF_04130">
    <property type="entry name" value="Rota_VP7"/>
    <property type="match status" value="1"/>
</dbReference>
<dbReference type="HAMAP" id="MF_04131">
    <property type="entry name" value="Rota_VP7_A"/>
    <property type="match status" value="1"/>
</dbReference>
<dbReference type="InterPro" id="IPR001963">
    <property type="entry name" value="VP7"/>
</dbReference>
<dbReference type="InterPro" id="IPR042207">
    <property type="entry name" value="VP7_1"/>
</dbReference>
<dbReference type="InterPro" id="IPR042210">
    <property type="entry name" value="VP7_2"/>
</dbReference>
<dbReference type="Pfam" id="PF00434">
    <property type="entry name" value="VP7"/>
    <property type="match status" value="1"/>
</dbReference>